<reference key="1">
    <citation type="submission" date="2006-09" db="EMBL/GenBank/DDBJ databases">
        <title>Complete sequence of Rhodopseudomonas palustris BisA53.</title>
        <authorList>
            <consortium name="US DOE Joint Genome Institute"/>
            <person name="Copeland A."/>
            <person name="Lucas S."/>
            <person name="Lapidus A."/>
            <person name="Barry K."/>
            <person name="Detter J.C."/>
            <person name="Glavina del Rio T."/>
            <person name="Hammon N."/>
            <person name="Israni S."/>
            <person name="Dalin E."/>
            <person name="Tice H."/>
            <person name="Pitluck S."/>
            <person name="Chain P."/>
            <person name="Malfatti S."/>
            <person name="Shin M."/>
            <person name="Vergez L."/>
            <person name="Schmutz J."/>
            <person name="Larimer F."/>
            <person name="Land M."/>
            <person name="Hauser L."/>
            <person name="Pelletier D.A."/>
            <person name="Kyrpides N."/>
            <person name="Kim E."/>
            <person name="Harwood C.S."/>
            <person name="Oda Y."/>
            <person name="Richardson P."/>
        </authorList>
    </citation>
    <scope>NUCLEOTIDE SEQUENCE [LARGE SCALE GENOMIC DNA]</scope>
    <source>
        <strain>BisA53</strain>
    </source>
</reference>
<proteinExistence type="inferred from homology"/>
<dbReference type="EC" id="3.6.1.-" evidence="1"/>
<dbReference type="EMBL" id="CP000463">
    <property type="protein sequence ID" value="ABJ04232.1"/>
    <property type="molecule type" value="Genomic_DNA"/>
</dbReference>
<dbReference type="SMR" id="Q07V02"/>
<dbReference type="STRING" id="316055.RPE_0273"/>
<dbReference type="KEGG" id="rpe:RPE_0273"/>
<dbReference type="eggNOG" id="COG0494">
    <property type="taxonomic scope" value="Bacteria"/>
</dbReference>
<dbReference type="HOGENOM" id="CLU_087195_3_0_5"/>
<dbReference type="OrthoDB" id="9816040at2"/>
<dbReference type="GO" id="GO:0034432">
    <property type="term" value="F:bis(5'-adenosyl)-pentaphosphatase activity"/>
    <property type="evidence" value="ECO:0007669"/>
    <property type="project" value="TreeGrafter"/>
</dbReference>
<dbReference type="GO" id="GO:0008893">
    <property type="term" value="F:guanosine-3',5'-bis(diphosphate) 3'-diphosphatase activity"/>
    <property type="evidence" value="ECO:0007669"/>
    <property type="project" value="TreeGrafter"/>
</dbReference>
<dbReference type="GO" id="GO:0006753">
    <property type="term" value="P:nucleoside phosphate metabolic process"/>
    <property type="evidence" value="ECO:0007669"/>
    <property type="project" value="TreeGrafter"/>
</dbReference>
<dbReference type="GO" id="GO:0019693">
    <property type="term" value="P:ribose phosphate metabolic process"/>
    <property type="evidence" value="ECO:0007669"/>
    <property type="project" value="TreeGrafter"/>
</dbReference>
<dbReference type="CDD" id="cd03671">
    <property type="entry name" value="NUDIX_Ap4A_hydrolase_plant_like"/>
    <property type="match status" value="1"/>
</dbReference>
<dbReference type="Gene3D" id="3.90.79.10">
    <property type="entry name" value="Nucleoside Triphosphate Pyrophosphohydrolase"/>
    <property type="match status" value="1"/>
</dbReference>
<dbReference type="HAMAP" id="MF_00298">
    <property type="entry name" value="Nudix_RppH"/>
    <property type="match status" value="1"/>
</dbReference>
<dbReference type="InterPro" id="IPR015797">
    <property type="entry name" value="NUDIX_hydrolase-like_dom_sf"/>
</dbReference>
<dbReference type="InterPro" id="IPR000086">
    <property type="entry name" value="NUDIX_hydrolase_dom"/>
</dbReference>
<dbReference type="InterPro" id="IPR022927">
    <property type="entry name" value="RppH"/>
</dbReference>
<dbReference type="NCBIfam" id="NF001938">
    <property type="entry name" value="PRK00714.1-5"/>
    <property type="match status" value="1"/>
</dbReference>
<dbReference type="PANTHER" id="PTHR11839:SF22">
    <property type="entry name" value="NUDIX HYDROLASE 26, CHLOROPLASTIC"/>
    <property type="match status" value="1"/>
</dbReference>
<dbReference type="PANTHER" id="PTHR11839">
    <property type="entry name" value="UDP/ADP-SUGAR PYROPHOSPHATASE"/>
    <property type="match status" value="1"/>
</dbReference>
<dbReference type="Pfam" id="PF00293">
    <property type="entry name" value="NUDIX"/>
    <property type="match status" value="1"/>
</dbReference>
<dbReference type="SUPFAM" id="SSF55811">
    <property type="entry name" value="Nudix"/>
    <property type="match status" value="1"/>
</dbReference>
<dbReference type="PROSITE" id="PS51462">
    <property type="entry name" value="NUDIX"/>
    <property type="match status" value="1"/>
</dbReference>
<sequence>MARYEDLPYRTCVGMMLLNAEGLVFIGRRSGGIEHVDDSHVWQMPQGGVDPGEDTWAAAKRELYEETSVQSVEKLGEISDWLIYDIPRTVAGRAWKGRYRGQRQKWYAVRFTGLDSEIDVTTPGGGHKAEFISWRWEPMQNLPNLIVPFKRPVYERVVKEFSALGFPEPKASVGHR</sequence>
<name>RPPH_RHOP5</name>
<comment type="function">
    <text evidence="1">Accelerates the degradation of transcripts by removing pyrophosphate from the 5'-end of triphosphorylated RNA, leading to a more labile monophosphorylated state that can stimulate subsequent ribonuclease cleavage.</text>
</comment>
<comment type="cofactor">
    <cofactor evidence="1">
        <name>a divalent metal cation</name>
        <dbReference type="ChEBI" id="CHEBI:60240"/>
    </cofactor>
</comment>
<comment type="similarity">
    <text evidence="1">Belongs to the Nudix hydrolase family. RppH subfamily.</text>
</comment>
<evidence type="ECO:0000255" key="1">
    <source>
        <dbReference type="HAMAP-Rule" id="MF_00298"/>
    </source>
</evidence>
<feature type="chain" id="PRO_1000021981" description="RNA pyrophosphohydrolase">
    <location>
        <begin position="1"/>
        <end position="176"/>
    </location>
</feature>
<feature type="domain" description="Nudix hydrolase" evidence="1">
    <location>
        <begin position="8"/>
        <end position="159"/>
    </location>
</feature>
<feature type="short sequence motif" description="Nudix box">
    <location>
        <begin position="47"/>
        <end position="68"/>
    </location>
</feature>
<organism>
    <name type="scientific">Rhodopseudomonas palustris (strain BisA53)</name>
    <dbReference type="NCBI Taxonomy" id="316055"/>
    <lineage>
        <taxon>Bacteria</taxon>
        <taxon>Pseudomonadati</taxon>
        <taxon>Pseudomonadota</taxon>
        <taxon>Alphaproteobacteria</taxon>
        <taxon>Hyphomicrobiales</taxon>
        <taxon>Nitrobacteraceae</taxon>
        <taxon>Rhodopseudomonas</taxon>
    </lineage>
</organism>
<protein>
    <recommendedName>
        <fullName evidence="1">RNA pyrophosphohydrolase</fullName>
        <ecNumber evidence="1">3.6.1.-</ecNumber>
    </recommendedName>
    <alternativeName>
        <fullName evidence="1">(Di)nucleoside polyphosphate hydrolase</fullName>
    </alternativeName>
</protein>
<keyword id="KW-0378">Hydrolase</keyword>
<gene>
    <name evidence="1" type="primary">rppH</name>
    <name evidence="1" type="synonym">nudH</name>
    <name type="ordered locus">RPE_0273</name>
</gene>
<accession>Q07V02</accession>